<protein>
    <recommendedName>
        <fullName evidence="12">Mitogen-activated protein kinase kinase kinase YODA</fullName>
        <ecNumber evidence="1 7">2.7.11.25</ecNumber>
    </recommendedName>
    <alternativeName>
        <fullName evidence="12">YODA MAPKK kinase</fullName>
    </alternativeName>
</protein>
<gene>
    <name evidence="12" type="primary">YDA</name>
    <name evidence="15" type="ordered locus">At1g63700</name>
    <name evidence="16" type="ORF">F24D7.11</name>
</gene>
<comment type="function">
    <text evidence="3 4 5 6 7 8">Functions in a MAP kinase cascade that acts as a molecular switch to regulate the first cell fate decisions in the zygote and the early embryo. Promotes elongation of the zygote and development of its basal daughter cell into the extra-embryonic suspensor. In stomatal development, acts downstream of the LRR receptor TMM, but upstream of the MKK4/MKK5-MPK3/MPK6 module to regulate stomatal cell fate before the guard mother cell (GMC) is specified. Plays a central role in both guard cell identity and pattern formation. This MAPK cascade also functions downstream of the ER receptor in regulating coordinated local cell proliferation, which shapes the morphology of plant organs. Upon brassinosteroid signaling, is inhibited by phosphorylation of its auto-inhibitory N-terminal domain by the GSK3-like kinase ASK7.</text>
</comment>
<comment type="catalytic activity">
    <reaction evidence="7">
        <text>L-seryl-[protein] + ATP = O-phospho-L-seryl-[protein] + ADP + H(+)</text>
        <dbReference type="Rhea" id="RHEA:17989"/>
        <dbReference type="Rhea" id="RHEA-COMP:9863"/>
        <dbReference type="Rhea" id="RHEA-COMP:11604"/>
        <dbReference type="ChEBI" id="CHEBI:15378"/>
        <dbReference type="ChEBI" id="CHEBI:29999"/>
        <dbReference type="ChEBI" id="CHEBI:30616"/>
        <dbReference type="ChEBI" id="CHEBI:83421"/>
        <dbReference type="ChEBI" id="CHEBI:456216"/>
        <dbReference type="EC" id="2.7.11.25"/>
    </reaction>
</comment>
<comment type="catalytic activity">
    <reaction evidence="7">
        <text>L-threonyl-[protein] + ATP = O-phospho-L-threonyl-[protein] + ADP + H(+)</text>
        <dbReference type="Rhea" id="RHEA:46608"/>
        <dbReference type="Rhea" id="RHEA-COMP:11060"/>
        <dbReference type="Rhea" id="RHEA-COMP:11605"/>
        <dbReference type="ChEBI" id="CHEBI:15378"/>
        <dbReference type="ChEBI" id="CHEBI:30013"/>
        <dbReference type="ChEBI" id="CHEBI:30616"/>
        <dbReference type="ChEBI" id="CHEBI:61977"/>
        <dbReference type="ChEBI" id="CHEBI:456216"/>
        <dbReference type="EC" id="2.7.11.25"/>
    </reaction>
</comment>
<comment type="activity regulation">
    <text>Contains an N-terminal autoinhibitory domain.</text>
</comment>
<comment type="subunit">
    <text evidence="7 9 11">Interacts with ASK7 (PubMed:22307275). Interacts with BSK12/SSP (PubMed:28821747). Binds to BASL and MPK6 (PubMed:25843888).</text>
</comment>
<comment type="interaction">
    <interactant intactId="EBI-15967064">
        <id>Q9CAD5</id>
    </interactant>
    <interactant intactId="EBI-1798250">
        <id>Q39011</id>
        <label>ASK7</label>
    </interactant>
    <organismsDiffer>false</organismsDiffer>
    <experiments>4</experiments>
</comment>
<comment type="subcellular location">
    <subcellularLocation>
        <location evidence="9">Cytoplasm</location>
        <location evidence="9">Cell cortex</location>
    </subcellularLocation>
    <subcellularLocation>
        <location evidence="9">Cell membrane</location>
    </subcellularLocation>
    <text evidence="9">Recruited by BASL at the cell cortex in a polarized manner.</text>
</comment>
<comment type="tissue specificity">
    <text evidence="3 4">Expressed in roots, leaves, guard cells, stems, flowers and siliques.</text>
</comment>
<comment type="developmental stage">
    <text evidence="10">Copolarizes with BASL and MPK3/MPK6 in stomatal asymmetric cell division (ACD) cells.</text>
</comment>
<comment type="disruption phenotype">
    <text evidence="3 4">Severely dwarf plants that rarely survive on soil, small rosettes, compact leaves, extremely compressed shoots, and short, sterile flowers. No proper elongation of the zygote and differentiation of the extra-embryonic suspensor. Excess of stomata in leaves.</text>
</comment>
<comment type="miscellaneous">
    <text evidence="14">N-terminal deletions of YDA results in gain-of-function alleles with phenotypes (no stomata and exaggerated suspensor growth) opposite to loss-of-function phenotypes.</text>
</comment>
<comment type="similarity">
    <text evidence="13">Belongs to the protein kinase superfamily. STE Ser/Thr protein kinase family. MAP kinase kinase kinase subfamily.</text>
</comment>
<proteinExistence type="evidence at protein level"/>
<keyword id="KW-0067">ATP-binding</keyword>
<keyword id="KW-1003">Cell membrane</keyword>
<keyword id="KW-0963">Cytoplasm</keyword>
<keyword id="KW-0217">Developmental protein</keyword>
<keyword id="KW-0341">Growth regulation</keyword>
<keyword id="KW-0418">Kinase</keyword>
<keyword id="KW-0472">Membrane</keyword>
<keyword id="KW-0547">Nucleotide-binding</keyword>
<keyword id="KW-1185">Reference proteome</keyword>
<keyword id="KW-0808">Transferase</keyword>
<sequence>MPWWSKSKDEKKKTNKESIIDAFNRKLGFASEDRSSGRSRKSRRRRDEIVSERGAISRLPSRSPSPSTRVSRCQSFAERSPAVPLPRPIVRPHVTSTDSGMNGSQRPGLDANLKPSWLPLPKPHGATSIPDNTGAEPDFATASVSSGSSVGDIPSDSLLSPLASDCENGNRTPVNISSRDQSMHSNKNSAEMFKPVPNKNRILSASPRRRPLGTHVKNLQIPQRDLVLCSAPDSLLSSPSRSPMRSFIPDQVSNHGLLISKPYSDVSLLGSGQCSSPGSGYNSGNNSIGGDMATQLFWPQSRCSPECSPVPSPRMTSPGPSSRIQSGAVTPLHPRAGGSTTGSPTRRLDDNRQQSHRLPLPPLLISNTCPFSPTYSAATSPSVPRSPARAEATVSPGSRWKKGRLLGMGSFGHVYLGFNSESGEMCAMKEVTLCSDDPKSRESAQQLGQEISVLSRLRHQNIVQYYGSETVDDKLYIYLEYVSGGSIYKLLQEYGQFGENAIRNYTQQILSGLAYLHAKNTVHRDIKGANILVDPHGRVKVADFGMAKHITAQSGPLSFKGSPYWMAPEVIKNSNGSNLAVDIWSLGCTVLEMATTKPPWSQYEGVPAMFKIGNSKELPDIPDHLSEEGKDFVRKCLQRNPANRPTAAQLLDHAFVRNVMPMERPIVSGEPAEAMNVASSTMRSLDIGHARSLPCLDSEDATNYQQKGLKHGSGFSISQSPRNMSCPISPVGSPIFHSHSPHISGRRSPSPISSPHALSGSSTPLTGCGGAIPFHHQRQTTVNFLHEGIGSSRSPGSGGNFYTNSFFQEPSRQQDRSRSSPRTPPHVFWDNNGSIQPGYNWNKDNQPVLSDHVSQQLLSEHLKLKSLDLRPGFSTPGSTNRGP</sequence>
<reference key="1">
    <citation type="journal article" date="2004" name="Cell">
        <title>A MAPKK kinase gene regulates extra-embryonic cell fate in Arabidopsis.</title>
        <authorList>
            <person name="Lukowitz W."/>
            <person name="Roeder A."/>
            <person name="Parmenter D."/>
            <person name="Somerville C."/>
        </authorList>
    </citation>
    <scope>NUCLEOTIDE SEQUENCE [GENOMIC DNA / MRNA]</scope>
    <scope>FUNCTION</scope>
    <scope>TISSUE SPECIFICITY</scope>
    <scope>DISRUPTION PHENOTYPE</scope>
    <source>
        <strain>cv. C24</strain>
        <strain>cv. Columbia</strain>
        <strain>cv. Landsberg erecta</strain>
    </source>
</reference>
<reference key="2">
    <citation type="journal article" date="2000" name="Nature">
        <title>Sequence and analysis of chromosome 1 of the plant Arabidopsis thaliana.</title>
        <authorList>
            <person name="Theologis A."/>
            <person name="Ecker J.R."/>
            <person name="Palm C.J."/>
            <person name="Federspiel N.A."/>
            <person name="Kaul S."/>
            <person name="White O."/>
            <person name="Alonso J."/>
            <person name="Altafi H."/>
            <person name="Araujo R."/>
            <person name="Bowman C.L."/>
            <person name="Brooks S.Y."/>
            <person name="Buehler E."/>
            <person name="Chan A."/>
            <person name="Chao Q."/>
            <person name="Chen H."/>
            <person name="Cheuk R.F."/>
            <person name="Chin C.W."/>
            <person name="Chung M.K."/>
            <person name="Conn L."/>
            <person name="Conway A.B."/>
            <person name="Conway A.R."/>
            <person name="Creasy T.H."/>
            <person name="Dewar K."/>
            <person name="Dunn P."/>
            <person name="Etgu P."/>
            <person name="Feldblyum T.V."/>
            <person name="Feng J.-D."/>
            <person name="Fong B."/>
            <person name="Fujii C.Y."/>
            <person name="Gill J.E."/>
            <person name="Goldsmith A.D."/>
            <person name="Haas B."/>
            <person name="Hansen N.F."/>
            <person name="Hughes B."/>
            <person name="Huizar L."/>
            <person name="Hunter J.L."/>
            <person name="Jenkins J."/>
            <person name="Johnson-Hopson C."/>
            <person name="Khan S."/>
            <person name="Khaykin E."/>
            <person name="Kim C.J."/>
            <person name="Koo H.L."/>
            <person name="Kremenetskaia I."/>
            <person name="Kurtz D.B."/>
            <person name="Kwan A."/>
            <person name="Lam B."/>
            <person name="Langin-Hooper S."/>
            <person name="Lee A."/>
            <person name="Lee J.M."/>
            <person name="Lenz C.A."/>
            <person name="Li J.H."/>
            <person name="Li Y.-P."/>
            <person name="Lin X."/>
            <person name="Liu S.X."/>
            <person name="Liu Z.A."/>
            <person name="Luros J.S."/>
            <person name="Maiti R."/>
            <person name="Marziali A."/>
            <person name="Militscher J."/>
            <person name="Miranda M."/>
            <person name="Nguyen M."/>
            <person name="Nierman W.C."/>
            <person name="Osborne B.I."/>
            <person name="Pai G."/>
            <person name="Peterson J."/>
            <person name="Pham P.K."/>
            <person name="Rizzo M."/>
            <person name="Rooney T."/>
            <person name="Rowley D."/>
            <person name="Sakano H."/>
            <person name="Salzberg S.L."/>
            <person name="Schwartz J.R."/>
            <person name="Shinn P."/>
            <person name="Southwick A.M."/>
            <person name="Sun H."/>
            <person name="Tallon L.J."/>
            <person name="Tambunga G."/>
            <person name="Toriumi M.J."/>
            <person name="Town C.D."/>
            <person name="Utterback T."/>
            <person name="Van Aken S."/>
            <person name="Vaysberg M."/>
            <person name="Vysotskaia V.S."/>
            <person name="Walker M."/>
            <person name="Wu D."/>
            <person name="Yu G."/>
            <person name="Fraser C.M."/>
            <person name="Venter J.C."/>
            <person name="Davis R.W."/>
        </authorList>
    </citation>
    <scope>NUCLEOTIDE SEQUENCE [LARGE SCALE GENOMIC DNA]</scope>
    <source>
        <strain>cv. Columbia</strain>
    </source>
</reference>
<reference key="3">
    <citation type="journal article" date="2017" name="Plant J.">
        <title>Araport11: a complete reannotation of the Arabidopsis thaliana reference genome.</title>
        <authorList>
            <person name="Cheng C.Y."/>
            <person name="Krishnakumar V."/>
            <person name="Chan A.P."/>
            <person name="Thibaud-Nissen F."/>
            <person name="Schobel S."/>
            <person name="Town C.D."/>
        </authorList>
    </citation>
    <scope>GENOME REANNOTATION</scope>
    <source>
        <strain>cv. Columbia</strain>
    </source>
</reference>
<reference key="4">
    <citation type="journal article" date="2004" name="Science">
        <title>Stomatal development and pattern controlled by a MAPKK kinase.</title>
        <authorList>
            <person name="Bergmann D.C."/>
            <person name="Lukowitz W."/>
            <person name="Somerville C.R."/>
        </authorList>
    </citation>
    <scope>FUNCTION</scope>
    <scope>TISSUE SPECIFICITY</scope>
    <scope>DISRUPTION PHENOTYPE</scope>
    <source>
        <strain>cv. C24</strain>
    </source>
</reference>
<reference key="5">
    <citation type="journal article" date="2007" name="Plant Cell">
        <title>Stomatal development and patterning are regulated by environmentally responsive mitogen-activated protein kinases in Arabidopsis.</title>
        <authorList>
            <person name="Wang H."/>
            <person name="Ngwenyama N."/>
            <person name="Liu Y."/>
            <person name="Walker J.C."/>
            <person name="Zhang S."/>
        </authorList>
    </citation>
    <scope>FUNCTION</scope>
    <source>
        <strain>cv. Landsberg erecta</strain>
    </source>
</reference>
<reference key="6">
    <citation type="journal article" date="2009" name="Science">
        <title>Paternal control of embryonic patterning in Arabidopsis thaliana.</title>
        <authorList>
            <person name="Bayer M."/>
            <person name="Nawy T."/>
            <person name="Giglione C."/>
            <person name="Galli M."/>
            <person name="Meinnel T."/>
            <person name="Lukowitz W."/>
        </authorList>
    </citation>
    <scope>FUNCTION</scope>
</reference>
<reference key="7">
    <citation type="journal article" date="2012" name="Nature">
        <title>Brassinosteroid regulates stomatal development by GSK3-mediated inhibition of a MAPK pathway.</title>
        <authorList>
            <person name="Kim T.W."/>
            <person name="Michniewicz M."/>
            <person name="Bergmann D.C."/>
            <person name="Wang Z.Y."/>
        </authorList>
    </citation>
    <scope>FUNCTION</scope>
    <scope>INTERACTION WITH ASK7</scope>
    <scope>CATALYTIC ACTIVITY</scope>
</reference>
<reference key="8">
    <citation type="journal article" date="2012" name="Plant Cell">
        <title>A MAPK cascade downstream of ERECTA receptor-like protein kinase regulates Arabidopsis inflorescence architecture by promoting localized cell proliferation.</title>
        <authorList>
            <person name="Meng X."/>
            <person name="Wang H."/>
            <person name="He Y."/>
            <person name="Liu Y."/>
            <person name="Walker J.C."/>
            <person name="Torii K.U."/>
            <person name="Zhang S."/>
        </authorList>
    </citation>
    <scope>FUNCTION</scope>
</reference>
<reference key="9">
    <citation type="journal article" date="2015" name="Dev. Cell">
        <title>The BASL polarity protein controls a MAPK signaling feedback loop in asymmetric cell division.</title>
        <authorList>
            <person name="Zhang Y."/>
            <person name="Wang P."/>
            <person name="Shao W."/>
            <person name="Zhu J.-K."/>
            <person name="Dong J."/>
        </authorList>
    </citation>
    <scope>INTERACTION WITH BASL AND MPK6</scope>
    <scope>MUTAGENESIS OF K429R</scope>
    <scope>SUBCELLULAR LOCATION</scope>
    <source>
        <strain>cv. Columbia</strain>
    </source>
</reference>
<reference key="10">
    <citation type="journal article" date="2016" name="Curr. Biol.">
        <title>Phosphorylation of the polarity protein BASL differentiates asymmetric cell fate through MAPKs and SPCH.</title>
        <authorList>
            <person name="Zhang Y."/>
            <person name="Guo X."/>
            <person name="Dong J."/>
        </authorList>
    </citation>
    <scope>DEVELOPMENTAL STAGE</scope>
    <source>
        <strain>cv. Columbia</strain>
    </source>
</reference>
<reference key="11">
    <citation type="journal article" date="2017" name="Sci. Rep.">
        <title>The integration of Gbeta and MAPK signaling cascade in zygote development.</title>
        <authorList>
            <person name="Yuan G.L."/>
            <person name="Li H.J."/>
            <person name="Yang W.C."/>
        </authorList>
    </citation>
    <scope>INTERACTION WITH BSK12/SSP</scope>
</reference>
<accession>Q9CAD5</accession>
<accession>Q6UY78</accession>
<name>YODA_ARATH</name>
<feature type="chain" id="PRO_0000422174" description="Mitogen-activated protein kinase kinase kinase YODA">
    <location>
        <begin position="1"/>
        <end position="883"/>
    </location>
</feature>
<feature type="domain" description="Protein kinase" evidence="1">
    <location>
        <begin position="400"/>
        <end position="656"/>
    </location>
</feature>
<feature type="region of interest" description="Disordered" evidence="2">
    <location>
        <begin position="28"/>
        <end position="193"/>
    </location>
</feature>
<feature type="region of interest" description="Disordered" evidence="2">
    <location>
        <begin position="303"/>
        <end position="364"/>
    </location>
</feature>
<feature type="region of interest" description="Disordered" evidence="2">
    <location>
        <begin position="376"/>
        <end position="396"/>
    </location>
</feature>
<feature type="region of interest" description="Disordered" evidence="2">
    <location>
        <begin position="712"/>
        <end position="773"/>
    </location>
</feature>
<feature type="region of interest" description="Disordered" evidence="2">
    <location>
        <begin position="787"/>
        <end position="838"/>
    </location>
</feature>
<feature type="compositionally biased region" description="Low complexity" evidence="2">
    <location>
        <begin position="57"/>
        <end position="72"/>
    </location>
</feature>
<feature type="compositionally biased region" description="Polar residues" evidence="2">
    <location>
        <begin position="94"/>
        <end position="105"/>
    </location>
</feature>
<feature type="compositionally biased region" description="Low complexity" evidence="2">
    <location>
        <begin position="143"/>
        <end position="165"/>
    </location>
</feature>
<feature type="compositionally biased region" description="Polar residues" evidence="2">
    <location>
        <begin position="167"/>
        <end position="189"/>
    </location>
</feature>
<feature type="compositionally biased region" description="Polar residues" evidence="2">
    <location>
        <begin position="314"/>
        <end position="328"/>
    </location>
</feature>
<feature type="compositionally biased region" description="Low complexity" evidence="2">
    <location>
        <begin position="733"/>
        <end position="756"/>
    </location>
</feature>
<feature type="active site" description="Proton acceptor" evidence="1">
    <location>
        <position position="525"/>
    </location>
</feature>
<feature type="binding site" evidence="1">
    <location>
        <begin position="406"/>
        <end position="414"/>
    </location>
    <ligand>
        <name>ATP</name>
        <dbReference type="ChEBI" id="CHEBI:30616"/>
    </ligand>
</feature>
<feature type="binding site" evidence="1">
    <location>
        <position position="429"/>
    </location>
    <ligand>
        <name>ATP</name>
        <dbReference type="ChEBI" id="CHEBI:30616"/>
    </ligand>
</feature>
<feature type="mutagenesis site" description="Kinase-inactive, enhanced polarized subcellular localization in a BASL-dependent manner." evidence="9">
    <original>K</original>
    <variation>R</variation>
    <location>
        <position position="429"/>
    </location>
</feature>
<feature type="sequence conflict" description="In Ref. 1; AAR10436." evidence="13" ref="1">
    <original>P</original>
    <variation>A</variation>
    <location>
        <position position="197"/>
    </location>
</feature>
<dbReference type="EC" id="2.7.11.25" evidence="1 7"/>
<dbReference type="EMBL" id="AY357947">
    <property type="protein sequence ID" value="AAR10434.1"/>
    <property type="molecule type" value="mRNA"/>
</dbReference>
<dbReference type="EMBL" id="AY357948">
    <property type="protein sequence ID" value="AAR10435.1"/>
    <property type="molecule type" value="Genomic_DNA"/>
</dbReference>
<dbReference type="EMBL" id="AY357949">
    <property type="protein sequence ID" value="AAR10436.1"/>
    <property type="molecule type" value="Genomic_DNA"/>
</dbReference>
<dbReference type="EMBL" id="AC011622">
    <property type="protein sequence ID" value="AAG52426.1"/>
    <property type="molecule type" value="Genomic_DNA"/>
</dbReference>
<dbReference type="EMBL" id="CP002684">
    <property type="protein sequence ID" value="AEE34135.1"/>
    <property type="molecule type" value="Genomic_DNA"/>
</dbReference>
<dbReference type="EMBL" id="CP002684">
    <property type="protein sequence ID" value="ANM60901.1"/>
    <property type="molecule type" value="Genomic_DNA"/>
</dbReference>
<dbReference type="PIR" id="A96662">
    <property type="entry name" value="A96662"/>
</dbReference>
<dbReference type="RefSeq" id="NP_001319310.1">
    <property type="nucleotide sequence ID" value="NM_001334122.1"/>
</dbReference>
<dbReference type="RefSeq" id="NP_176557.1">
    <property type="nucleotide sequence ID" value="NM_105047.2"/>
</dbReference>
<dbReference type="SMR" id="Q9CAD5"/>
<dbReference type="BioGRID" id="27895">
    <property type="interactions" value="2"/>
</dbReference>
<dbReference type="DIP" id="DIP-59652N"/>
<dbReference type="FunCoup" id="Q9CAD5">
    <property type="interactions" value="2322"/>
</dbReference>
<dbReference type="IntAct" id="Q9CAD5">
    <property type="interactions" value="1"/>
</dbReference>
<dbReference type="STRING" id="3702.Q9CAD5"/>
<dbReference type="iPTMnet" id="Q9CAD5"/>
<dbReference type="PaxDb" id="3702-AT1G63700.1"/>
<dbReference type="ProteomicsDB" id="242919"/>
<dbReference type="EnsemblPlants" id="AT1G63700.1">
    <property type="protein sequence ID" value="AT1G63700.1"/>
    <property type="gene ID" value="AT1G63700"/>
</dbReference>
<dbReference type="EnsemblPlants" id="AT1G63700.2">
    <property type="protein sequence ID" value="AT1G63700.2"/>
    <property type="gene ID" value="AT1G63700"/>
</dbReference>
<dbReference type="GeneID" id="842674"/>
<dbReference type="Gramene" id="AT1G63700.1">
    <property type="protein sequence ID" value="AT1G63700.1"/>
    <property type="gene ID" value="AT1G63700"/>
</dbReference>
<dbReference type="Gramene" id="AT1G63700.2">
    <property type="protein sequence ID" value="AT1G63700.2"/>
    <property type="gene ID" value="AT1G63700"/>
</dbReference>
<dbReference type="KEGG" id="ath:AT1G63700"/>
<dbReference type="Araport" id="AT1G63700"/>
<dbReference type="TAIR" id="AT1G63700">
    <property type="gene designation" value="YDA"/>
</dbReference>
<dbReference type="eggNOG" id="KOG0198">
    <property type="taxonomic scope" value="Eukaryota"/>
</dbReference>
<dbReference type="HOGENOM" id="CLU_000288_124_0_1"/>
<dbReference type="InParanoid" id="Q9CAD5"/>
<dbReference type="OMA" id="TTYLHEG"/>
<dbReference type="PhylomeDB" id="Q9CAD5"/>
<dbReference type="PRO" id="PR:Q9CAD5"/>
<dbReference type="Proteomes" id="UP000006548">
    <property type="component" value="Chromosome 1"/>
</dbReference>
<dbReference type="ExpressionAtlas" id="Q9CAD5">
    <property type="expression patterns" value="baseline and differential"/>
</dbReference>
<dbReference type="GO" id="GO:0005938">
    <property type="term" value="C:cell cortex"/>
    <property type="evidence" value="ECO:0000314"/>
    <property type="project" value="UniProtKB"/>
</dbReference>
<dbReference type="GO" id="GO:0005886">
    <property type="term" value="C:plasma membrane"/>
    <property type="evidence" value="ECO:0000314"/>
    <property type="project" value="UniProtKB"/>
</dbReference>
<dbReference type="GO" id="GO:0005524">
    <property type="term" value="F:ATP binding"/>
    <property type="evidence" value="ECO:0007669"/>
    <property type="project" value="UniProtKB-KW"/>
</dbReference>
<dbReference type="GO" id="GO:0004709">
    <property type="term" value="F:MAP kinase kinase kinase activity"/>
    <property type="evidence" value="ECO:0007669"/>
    <property type="project" value="UniProtKB-EC"/>
</dbReference>
<dbReference type="GO" id="GO:0106310">
    <property type="term" value="F:protein serine kinase activity"/>
    <property type="evidence" value="ECO:0007669"/>
    <property type="project" value="RHEA"/>
</dbReference>
<dbReference type="GO" id="GO:0010229">
    <property type="term" value="P:inflorescence development"/>
    <property type="evidence" value="ECO:0000315"/>
    <property type="project" value="TAIR"/>
</dbReference>
<dbReference type="GO" id="GO:0010103">
    <property type="term" value="P:stomatal complex morphogenesis"/>
    <property type="evidence" value="ECO:0000315"/>
    <property type="project" value="TAIR"/>
</dbReference>
<dbReference type="GO" id="GO:0010098">
    <property type="term" value="P:suspensor development"/>
    <property type="evidence" value="ECO:0000315"/>
    <property type="project" value="UniProtKB"/>
</dbReference>
<dbReference type="CDD" id="cd06632">
    <property type="entry name" value="STKc_MEKK1_plant"/>
    <property type="match status" value="1"/>
</dbReference>
<dbReference type="FunFam" id="1.10.510.10:FF:000186">
    <property type="entry name" value="Mitogen-activated protein kinase kinase kinase"/>
    <property type="match status" value="1"/>
</dbReference>
<dbReference type="Gene3D" id="1.10.510.10">
    <property type="entry name" value="Transferase(Phosphotransferase) domain 1"/>
    <property type="match status" value="1"/>
</dbReference>
<dbReference type="InterPro" id="IPR011009">
    <property type="entry name" value="Kinase-like_dom_sf"/>
</dbReference>
<dbReference type="InterPro" id="IPR050538">
    <property type="entry name" value="MAP_kinase_kinase_kinase"/>
</dbReference>
<dbReference type="InterPro" id="IPR000719">
    <property type="entry name" value="Prot_kinase_dom"/>
</dbReference>
<dbReference type="InterPro" id="IPR017441">
    <property type="entry name" value="Protein_kinase_ATP_BS"/>
</dbReference>
<dbReference type="PANTHER" id="PTHR48016">
    <property type="entry name" value="MAP KINASE KINASE KINASE SSK2-RELATED-RELATED"/>
    <property type="match status" value="1"/>
</dbReference>
<dbReference type="PANTHER" id="PTHR48016:SF17">
    <property type="entry name" value="MITOGEN-ACTIVATED PROTEIN KINASE KINASE KINASE YODA"/>
    <property type="match status" value="1"/>
</dbReference>
<dbReference type="Pfam" id="PF00069">
    <property type="entry name" value="Pkinase"/>
    <property type="match status" value="1"/>
</dbReference>
<dbReference type="SMART" id="SM00220">
    <property type="entry name" value="S_TKc"/>
    <property type="match status" value="1"/>
</dbReference>
<dbReference type="SUPFAM" id="SSF56112">
    <property type="entry name" value="Protein kinase-like (PK-like)"/>
    <property type="match status" value="1"/>
</dbReference>
<dbReference type="PROSITE" id="PS00107">
    <property type="entry name" value="PROTEIN_KINASE_ATP"/>
    <property type="match status" value="1"/>
</dbReference>
<dbReference type="PROSITE" id="PS50011">
    <property type="entry name" value="PROTEIN_KINASE_DOM"/>
    <property type="match status" value="1"/>
</dbReference>
<evidence type="ECO:0000255" key="1">
    <source>
        <dbReference type="PROSITE-ProRule" id="PRU00159"/>
    </source>
</evidence>
<evidence type="ECO:0000256" key="2">
    <source>
        <dbReference type="SAM" id="MobiDB-lite"/>
    </source>
</evidence>
<evidence type="ECO:0000269" key="3">
    <source>
    </source>
</evidence>
<evidence type="ECO:0000269" key="4">
    <source>
    </source>
</evidence>
<evidence type="ECO:0000269" key="5">
    <source>
    </source>
</evidence>
<evidence type="ECO:0000269" key="6">
    <source>
    </source>
</evidence>
<evidence type="ECO:0000269" key="7">
    <source>
    </source>
</evidence>
<evidence type="ECO:0000269" key="8">
    <source>
    </source>
</evidence>
<evidence type="ECO:0000269" key="9">
    <source>
    </source>
</evidence>
<evidence type="ECO:0000269" key="10">
    <source>
    </source>
</evidence>
<evidence type="ECO:0000269" key="11">
    <source>
    </source>
</evidence>
<evidence type="ECO:0000303" key="12">
    <source>
    </source>
</evidence>
<evidence type="ECO:0000305" key="13"/>
<evidence type="ECO:0000305" key="14">
    <source>
    </source>
</evidence>
<evidence type="ECO:0000312" key="15">
    <source>
        <dbReference type="Araport" id="AT1G63700"/>
    </source>
</evidence>
<evidence type="ECO:0000312" key="16">
    <source>
        <dbReference type="EMBL" id="AAG52426.1"/>
    </source>
</evidence>
<organism>
    <name type="scientific">Arabidopsis thaliana</name>
    <name type="common">Mouse-ear cress</name>
    <dbReference type="NCBI Taxonomy" id="3702"/>
    <lineage>
        <taxon>Eukaryota</taxon>
        <taxon>Viridiplantae</taxon>
        <taxon>Streptophyta</taxon>
        <taxon>Embryophyta</taxon>
        <taxon>Tracheophyta</taxon>
        <taxon>Spermatophyta</taxon>
        <taxon>Magnoliopsida</taxon>
        <taxon>eudicotyledons</taxon>
        <taxon>Gunneridae</taxon>
        <taxon>Pentapetalae</taxon>
        <taxon>rosids</taxon>
        <taxon>malvids</taxon>
        <taxon>Brassicales</taxon>
        <taxon>Brassicaceae</taxon>
        <taxon>Camelineae</taxon>
        <taxon>Arabidopsis</taxon>
    </lineage>
</organism>